<feature type="chain" id="PRO_1000080007" description="tRNA modification GTPase MnmE">
    <location>
        <begin position="1"/>
        <end position="461"/>
    </location>
</feature>
<feature type="domain" description="TrmE-type G">
    <location>
        <begin position="222"/>
        <end position="382"/>
    </location>
</feature>
<feature type="binding site" evidence="1">
    <location>
        <position position="22"/>
    </location>
    <ligand>
        <name>(6S)-5-formyl-5,6,7,8-tetrahydrofolate</name>
        <dbReference type="ChEBI" id="CHEBI:57457"/>
    </ligand>
</feature>
<feature type="binding site" evidence="1">
    <location>
        <position position="87"/>
    </location>
    <ligand>
        <name>(6S)-5-formyl-5,6,7,8-tetrahydrofolate</name>
        <dbReference type="ChEBI" id="CHEBI:57457"/>
    </ligand>
</feature>
<feature type="binding site" evidence="1">
    <location>
        <position position="126"/>
    </location>
    <ligand>
        <name>(6S)-5-formyl-5,6,7,8-tetrahydrofolate</name>
        <dbReference type="ChEBI" id="CHEBI:57457"/>
    </ligand>
</feature>
<feature type="binding site" evidence="1">
    <location>
        <begin position="232"/>
        <end position="237"/>
    </location>
    <ligand>
        <name>GTP</name>
        <dbReference type="ChEBI" id="CHEBI:37565"/>
    </ligand>
</feature>
<feature type="binding site" evidence="1">
    <location>
        <position position="232"/>
    </location>
    <ligand>
        <name>K(+)</name>
        <dbReference type="ChEBI" id="CHEBI:29103"/>
    </ligand>
</feature>
<feature type="binding site" evidence="1">
    <location>
        <position position="236"/>
    </location>
    <ligand>
        <name>Mg(2+)</name>
        <dbReference type="ChEBI" id="CHEBI:18420"/>
    </ligand>
</feature>
<feature type="binding site" evidence="1">
    <location>
        <begin position="251"/>
        <end position="257"/>
    </location>
    <ligand>
        <name>GTP</name>
        <dbReference type="ChEBI" id="CHEBI:37565"/>
    </ligand>
</feature>
<feature type="binding site" evidence="1">
    <location>
        <position position="251"/>
    </location>
    <ligand>
        <name>K(+)</name>
        <dbReference type="ChEBI" id="CHEBI:29103"/>
    </ligand>
</feature>
<feature type="binding site" evidence="1">
    <location>
        <position position="253"/>
    </location>
    <ligand>
        <name>K(+)</name>
        <dbReference type="ChEBI" id="CHEBI:29103"/>
    </ligand>
</feature>
<feature type="binding site" evidence="1">
    <location>
        <position position="256"/>
    </location>
    <ligand>
        <name>K(+)</name>
        <dbReference type="ChEBI" id="CHEBI:29103"/>
    </ligand>
</feature>
<feature type="binding site" evidence="1">
    <location>
        <position position="257"/>
    </location>
    <ligand>
        <name>Mg(2+)</name>
        <dbReference type="ChEBI" id="CHEBI:18420"/>
    </ligand>
</feature>
<feature type="binding site" evidence="1">
    <location>
        <begin position="276"/>
        <end position="279"/>
    </location>
    <ligand>
        <name>GTP</name>
        <dbReference type="ChEBI" id="CHEBI:37565"/>
    </ligand>
</feature>
<feature type="binding site" evidence="1">
    <location>
        <position position="461"/>
    </location>
    <ligand>
        <name>(6S)-5-formyl-5,6,7,8-tetrahydrofolate</name>
        <dbReference type="ChEBI" id="CHEBI:57457"/>
    </ligand>
</feature>
<keyword id="KW-0963">Cytoplasm</keyword>
<keyword id="KW-0342">GTP-binding</keyword>
<keyword id="KW-0378">Hydrolase</keyword>
<keyword id="KW-0460">Magnesium</keyword>
<keyword id="KW-0479">Metal-binding</keyword>
<keyword id="KW-0547">Nucleotide-binding</keyword>
<keyword id="KW-0630">Potassium</keyword>
<keyword id="KW-1185">Reference proteome</keyword>
<keyword id="KW-0819">tRNA processing</keyword>
<name>MNME_DESRM</name>
<comment type="function">
    <text evidence="1">Exhibits a very high intrinsic GTPase hydrolysis rate. Involved in the addition of a carboxymethylaminomethyl (cmnm) group at the wobble position (U34) of certain tRNAs, forming tRNA-cmnm(5)s(2)U34.</text>
</comment>
<comment type="cofactor">
    <cofactor evidence="1">
        <name>K(+)</name>
        <dbReference type="ChEBI" id="CHEBI:29103"/>
    </cofactor>
    <text evidence="1">Binds 1 potassium ion per subunit.</text>
</comment>
<comment type="subunit">
    <text evidence="1">Homodimer. Heterotetramer of two MnmE and two MnmG subunits.</text>
</comment>
<comment type="subcellular location">
    <subcellularLocation>
        <location evidence="1">Cytoplasm</location>
    </subcellularLocation>
</comment>
<comment type="similarity">
    <text evidence="1">Belongs to the TRAFAC class TrmE-Era-EngA-EngB-Septin-like GTPase superfamily. TrmE GTPase family.</text>
</comment>
<reference key="1">
    <citation type="submission" date="2007-03" db="EMBL/GenBank/DDBJ databases">
        <title>Complete sequence of Desulfotomaculum reducens MI-1.</title>
        <authorList>
            <consortium name="US DOE Joint Genome Institute"/>
            <person name="Copeland A."/>
            <person name="Lucas S."/>
            <person name="Lapidus A."/>
            <person name="Barry K."/>
            <person name="Detter J.C."/>
            <person name="Glavina del Rio T."/>
            <person name="Hammon N."/>
            <person name="Israni S."/>
            <person name="Dalin E."/>
            <person name="Tice H."/>
            <person name="Pitluck S."/>
            <person name="Sims D."/>
            <person name="Brettin T."/>
            <person name="Bruce D."/>
            <person name="Han C."/>
            <person name="Tapia R."/>
            <person name="Schmutz J."/>
            <person name="Larimer F."/>
            <person name="Land M."/>
            <person name="Hauser L."/>
            <person name="Kyrpides N."/>
            <person name="Kim E."/>
            <person name="Tebo B.M."/>
            <person name="Richardson P."/>
        </authorList>
    </citation>
    <scope>NUCLEOTIDE SEQUENCE [LARGE SCALE GENOMIC DNA]</scope>
    <source>
        <strain>ATCC BAA-1160 / DSM 100696 / MI-1</strain>
    </source>
</reference>
<dbReference type="EC" id="3.6.-.-" evidence="1"/>
<dbReference type="EMBL" id="CP000612">
    <property type="protein sequence ID" value="ABO51824.1"/>
    <property type="molecule type" value="Genomic_DNA"/>
</dbReference>
<dbReference type="RefSeq" id="WP_011879609.1">
    <property type="nucleotide sequence ID" value="NC_009253.1"/>
</dbReference>
<dbReference type="SMR" id="A4J9S1"/>
<dbReference type="STRING" id="349161.Dred_3324"/>
<dbReference type="KEGG" id="drm:Dred_3324"/>
<dbReference type="eggNOG" id="COG0486">
    <property type="taxonomic scope" value="Bacteria"/>
</dbReference>
<dbReference type="HOGENOM" id="CLU_019624_4_1_9"/>
<dbReference type="OrthoDB" id="9805918at2"/>
<dbReference type="Proteomes" id="UP000001556">
    <property type="component" value="Chromosome"/>
</dbReference>
<dbReference type="GO" id="GO:0005829">
    <property type="term" value="C:cytosol"/>
    <property type="evidence" value="ECO:0007669"/>
    <property type="project" value="TreeGrafter"/>
</dbReference>
<dbReference type="GO" id="GO:0005525">
    <property type="term" value="F:GTP binding"/>
    <property type="evidence" value="ECO:0007669"/>
    <property type="project" value="UniProtKB-UniRule"/>
</dbReference>
<dbReference type="GO" id="GO:0003924">
    <property type="term" value="F:GTPase activity"/>
    <property type="evidence" value="ECO:0007669"/>
    <property type="project" value="UniProtKB-UniRule"/>
</dbReference>
<dbReference type="GO" id="GO:0046872">
    <property type="term" value="F:metal ion binding"/>
    <property type="evidence" value="ECO:0007669"/>
    <property type="project" value="UniProtKB-KW"/>
</dbReference>
<dbReference type="GO" id="GO:0030488">
    <property type="term" value="P:tRNA methylation"/>
    <property type="evidence" value="ECO:0007669"/>
    <property type="project" value="TreeGrafter"/>
</dbReference>
<dbReference type="GO" id="GO:0002098">
    <property type="term" value="P:tRNA wobble uridine modification"/>
    <property type="evidence" value="ECO:0007669"/>
    <property type="project" value="TreeGrafter"/>
</dbReference>
<dbReference type="CDD" id="cd04164">
    <property type="entry name" value="trmE"/>
    <property type="match status" value="1"/>
</dbReference>
<dbReference type="CDD" id="cd14858">
    <property type="entry name" value="TrmE_N"/>
    <property type="match status" value="1"/>
</dbReference>
<dbReference type="FunFam" id="3.30.1360.120:FF:000003">
    <property type="entry name" value="tRNA modification GTPase MnmE"/>
    <property type="match status" value="1"/>
</dbReference>
<dbReference type="FunFam" id="3.40.50.300:FF:000494">
    <property type="entry name" value="tRNA modification GTPase MnmE"/>
    <property type="match status" value="1"/>
</dbReference>
<dbReference type="Gene3D" id="3.40.50.300">
    <property type="entry name" value="P-loop containing nucleotide triphosphate hydrolases"/>
    <property type="match status" value="1"/>
</dbReference>
<dbReference type="Gene3D" id="3.30.1360.120">
    <property type="entry name" value="Probable tRNA modification gtpase trme, domain 1"/>
    <property type="match status" value="1"/>
</dbReference>
<dbReference type="Gene3D" id="1.20.120.430">
    <property type="entry name" value="tRNA modification GTPase MnmE domain 2"/>
    <property type="match status" value="1"/>
</dbReference>
<dbReference type="HAMAP" id="MF_00379">
    <property type="entry name" value="GTPase_MnmE"/>
    <property type="match status" value="1"/>
</dbReference>
<dbReference type="InterPro" id="IPR031168">
    <property type="entry name" value="G_TrmE"/>
</dbReference>
<dbReference type="InterPro" id="IPR006073">
    <property type="entry name" value="GTP-bd"/>
</dbReference>
<dbReference type="InterPro" id="IPR018948">
    <property type="entry name" value="GTP-bd_TrmE_N"/>
</dbReference>
<dbReference type="InterPro" id="IPR004520">
    <property type="entry name" value="GTPase_MnmE"/>
</dbReference>
<dbReference type="InterPro" id="IPR027368">
    <property type="entry name" value="MnmE_dom2"/>
</dbReference>
<dbReference type="InterPro" id="IPR025867">
    <property type="entry name" value="MnmE_helical"/>
</dbReference>
<dbReference type="InterPro" id="IPR027417">
    <property type="entry name" value="P-loop_NTPase"/>
</dbReference>
<dbReference type="InterPro" id="IPR005225">
    <property type="entry name" value="Small_GTP-bd"/>
</dbReference>
<dbReference type="InterPro" id="IPR027266">
    <property type="entry name" value="TrmE/GcvT_dom1"/>
</dbReference>
<dbReference type="NCBIfam" id="TIGR00450">
    <property type="entry name" value="mnmE_trmE_thdF"/>
    <property type="match status" value="1"/>
</dbReference>
<dbReference type="NCBIfam" id="NF003661">
    <property type="entry name" value="PRK05291.1-3"/>
    <property type="match status" value="1"/>
</dbReference>
<dbReference type="NCBIfam" id="TIGR00231">
    <property type="entry name" value="small_GTP"/>
    <property type="match status" value="1"/>
</dbReference>
<dbReference type="PANTHER" id="PTHR42714">
    <property type="entry name" value="TRNA MODIFICATION GTPASE GTPBP3"/>
    <property type="match status" value="1"/>
</dbReference>
<dbReference type="PANTHER" id="PTHR42714:SF2">
    <property type="entry name" value="TRNA MODIFICATION GTPASE GTPBP3, MITOCHONDRIAL"/>
    <property type="match status" value="1"/>
</dbReference>
<dbReference type="Pfam" id="PF01926">
    <property type="entry name" value="MMR_HSR1"/>
    <property type="match status" value="1"/>
</dbReference>
<dbReference type="Pfam" id="PF12631">
    <property type="entry name" value="MnmE_helical"/>
    <property type="match status" value="1"/>
</dbReference>
<dbReference type="Pfam" id="PF10396">
    <property type="entry name" value="TrmE_N"/>
    <property type="match status" value="1"/>
</dbReference>
<dbReference type="PRINTS" id="PR00449">
    <property type="entry name" value="RASTRNSFRMNG"/>
</dbReference>
<dbReference type="SUPFAM" id="SSF52540">
    <property type="entry name" value="P-loop containing nucleoside triphosphate hydrolases"/>
    <property type="match status" value="1"/>
</dbReference>
<dbReference type="SUPFAM" id="SSF116878">
    <property type="entry name" value="TrmE connector domain"/>
    <property type="match status" value="1"/>
</dbReference>
<dbReference type="PROSITE" id="PS51709">
    <property type="entry name" value="G_TRME"/>
    <property type="match status" value="1"/>
</dbReference>
<protein>
    <recommendedName>
        <fullName evidence="1">tRNA modification GTPase MnmE</fullName>
        <ecNumber evidence="1">3.6.-.-</ecNumber>
    </recommendedName>
</protein>
<accession>A4J9S1</accession>
<organism>
    <name type="scientific">Desulforamulus reducens (strain ATCC BAA-1160 / DSM 100696 / MI-1)</name>
    <name type="common">Desulfotomaculum reducens</name>
    <dbReference type="NCBI Taxonomy" id="349161"/>
    <lineage>
        <taxon>Bacteria</taxon>
        <taxon>Bacillati</taxon>
        <taxon>Bacillota</taxon>
        <taxon>Clostridia</taxon>
        <taxon>Eubacteriales</taxon>
        <taxon>Peptococcaceae</taxon>
        <taxon>Desulforamulus</taxon>
    </lineage>
</organism>
<proteinExistence type="inferred from homology"/>
<gene>
    <name evidence="1" type="primary">mnmE</name>
    <name evidence="1" type="synonym">trmE</name>
    <name type="ordered locus">Dred_3324</name>
</gene>
<sequence length="461" mass="51017">MLDDTIVAIATALGEGSIGVIRMSGPDAITIGKKVFRPKYNKEWYQKDNYKIIYGHVINPETGEIIDEVLLSIMRGPKSFTAEDVIEISCHGGIIPLRKVLEVILRNGARHAEPGEFSKRSFLNGRLDLAQAESIIDIIRAKTDAGAKIAVNQLGGKLSEKVNGLQHKVLGLLAKIEAIIDFPEDDIPEENLLGISKECNSLIKEIEHLLAYADTGKIYREGLKTVIVGKPNVGKSSLLNALLHEQRAIVTDIPGTTRDVIEEILSIKGVPLKIIDTAGLRETQDLVEKIGVEKSRELLNQADIVLFVLDATTGISDEDRKVIDLIKDKKVLILINKIDITKNKIDSHEIRQLINFSEIIEISAQKEIGLDKLEETIFNMVVEGKITTTDSIFVSNSRHKHALERAMQHLLEASKGLQEYVPADLVSIDLKSSWEILGEITGNSVTEDLIDRIFSDFCIGK</sequence>
<evidence type="ECO:0000255" key="1">
    <source>
        <dbReference type="HAMAP-Rule" id="MF_00379"/>
    </source>
</evidence>